<evidence type="ECO:0000255" key="1">
    <source>
        <dbReference type="HAMAP-Rule" id="MF_00564"/>
    </source>
</evidence>
<reference key="1">
    <citation type="journal article" date="2009" name="PLoS Pathog.">
        <title>Molecular evolutionary consequences of niche restriction in Francisella tularensis, a facultative intracellular pathogen.</title>
        <authorList>
            <person name="Larsson P."/>
            <person name="Elfsmark D."/>
            <person name="Svensson K."/>
            <person name="Wikstroem P."/>
            <person name="Forsman M."/>
            <person name="Brettin T."/>
            <person name="Keim P."/>
            <person name="Johansson A."/>
        </authorList>
    </citation>
    <scope>NUCLEOTIDE SEQUENCE [LARGE SCALE GENOMIC DNA]</scope>
    <source>
        <strain>FSC147</strain>
    </source>
</reference>
<keyword id="KW-0548">Nucleotidyltransferase</keyword>
<keyword id="KW-0694">RNA-binding</keyword>
<keyword id="KW-0698">rRNA processing</keyword>
<keyword id="KW-0808">Transferase</keyword>
<keyword id="KW-0819">tRNA processing</keyword>
<keyword id="KW-0820">tRNA-binding</keyword>
<protein>
    <recommendedName>
        <fullName evidence="1">Ribonuclease PH</fullName>
        <shortName evidence="1">RNase PH</shortName>
        <ecNumber evidence="1">2.7.7.56</ecNumber>
    </recommendedName>
    <alternativeName>
        <fullName evidence="1">tRNA nucleotidyltransferase</fullName>
    </alternativeName>
</protein>
<gene>
    <name evidence="1" type="primary">rph</name>
    <name type="ordered locus">FTM_0450</name>
</gene>
<accession>B2SF43</accession>
<comment type="function">
    <text evidence="1">Phosphorolytic 3'-5' exoribonuclease that plays an important role in tRNA 3'-end maturation. Removes nucleotide residues following the 3'-CCA terminus of tRNAs; can also add nucleotides to the ends of RNA molecules by using nucleoside diphosphates as substrates, but this may not be physiologically important. Probably plays a role in initiation of 16S rRNA degradation (leading to ribosome degradation) during starvation.</text>
</comment>
<comment type="catalytic activity">
    <reaction evidence="1">
        <text>tRNA(n+1) + phosphate = tRNA(n) + a ribonucleoside 5'-diphosphate</text>
        <dbReference type="Rhea" id="RHEA:10628"/>
        <dbReference type="Rhea" id="RHEA-COMP:17343"/>
        <dbReference type="Rhea" id="RHEA-COMP:17344"/>
        <dbReference type="ChEBI" id="CHEBI:43474"/>
        <dbReference type="ChEBI" id="CHEBI:57930"/>
        <dbReference type="ChEBI" id="CHEBI:173114"/>
        <dbReference type="EC" id="2.7.7.56"/>
    </reaction>
</comment>
<comment type="subunit">
    <text evidence="1">Homohexameric ring arranged as a trimer of dimers.</text>
</comment>
<comment type="similarity">
    <text evidence="1">Belongs to the RNase PH family.</text>
</comment>
<organism>
    <name type="scientific">Francisella tularensis subsp. mediasiatica (strain FSC147)</name>
    <dbReference type="NCBI Taxonomy" id="441952"/>
    <lineage>
        <taxon>Bacteria</taxon>
        <taxon>Pseudomonadati</taxon>
        <taxon>Pseudomonadota</taxon>
        <taxon>Gammaproteobacteria</taxon>
        <taxon>Thiotrichales</taxon>
        <taxon>Francisellaceae</taxon>
        <taxon>Francisella</taxon>
    </lineage>
</organism>
<feature type="chain" id="PRO_1000129345" description="Ribonuclease PH">
    <location>
        <begin position="1"/>
        <end position="235"/>
    </location>
</feature>
<feature type="binding site" evidence="1">
    <location>
        <position position="86"/>
    </location>
    <ligand>
        <name>phosphate</name>
        <dbReference type="ChEBI" id="CHEBI:43474"/>
        <note>substrate</note>
    </ligand>
</feature>
<feature type="binding site" evidence="1">
    <location>
        <begin position="124"/>
        <end position="126"/>
    </location>
    <ligand>
        <name>phosphate</name>
        <dbReference type="ChEBI" id="CHEBI:43474"/>
        <note>substrate</note>
    </ligand>
</feature>
<proteinExistence type="inferred from homology"/>
<dbReference type="EC" id="2.7.7.56" evidence="1"/>
<dbReference type="EMBL" id="CP000915">
    <property type="protein sequence ID" value="ACD30475.1"/>
    <property type="molecule type" value="Genomic_DNA"/>
</dbReference>
<dbReference type="SMR" id="B2SF43"/>
<dbReference type="KEGG" id="ftm:FTM_0450"/>
<dbReference type="HOGENOM" id="CLU_050858_0_0_6"/>
<dbReference type="GO" id="GO:0000175">
    <property type="term" value="F:3'-5'-RNA exonuclease activity"/>
    <property type="evidence" value="ECO:0007669"/>
    <property type="project" value="UniProtKB-UniRule"/>
</dbReference>
<dbReference type="GO" id="GO:0000049">
    <property type="term" value="F:tRNA binding"/>
    <property type="evidence" value="ECO:0007669"/>
    <property type="project" value="UniProtKB-UniRule"/>
</dbReference>
<dbReference type="GO" id="GO:0009022">
    <property type="term" value="F:tRNA nucleotidyltransferase activity"/>
    <property type="evidence" value="ECO:0007669"/>
    <property type="project" value="UniProtKB-UniRule"/>
</dbReference>
<dbReference type="GO" id="GO:0016075">
    <property type="term" value="P:rRNA catabolic process"/>
    <property type="evidence" value="ECO:0007669"/>
    <property type="project" value="UniProtKB-UniRule"/>
</dbReference>
<dbReference type="GO" id="GO:0006364">
    <property type="term" value="P:rRNA processing"/>
    <property type="evidence" value="ECO:0007669"/>
    <property type="project" value="UniProtKB-KW"/>
</dbReference>
<dbReference type="GO" id="GO:0008033">
    <property type="term" value="P:tRNA processing"/>
    <property type="evidence" value="ECO:0007669"/>
    <property type="project" value="UniProtKB-UniRule"/>
</dbReference>
<dbReference type="CDD" id="cd11362">
    <property type="entry name" value="RNase_PH_bact"/>
    <property type="match status" value="1"/>
</dbReference>
<dbReference type="FunFam" id="3.30.230.70:FF:000003">
    <property type="entry name" value="Ribonuclease PH"/>
    <property type="match status" value="1"/>
</dbReference>
<dbReference type="Gene3D" id="3.30.230.70">
    <property type="entry name" value="GHMP Kinase, N-terminal domain"/>
    <property type="match status" value="1"/>
</dbReference>
<dbReference type="HAMAP" id="MF_00564">
    <property type="entry name" value="RNase_PH"/>
    <property type="match status" value="1"/>
</dbReference>
<dbReference type="InterPro" id="IPR001247">
    <property type="entry name" value="ExoRNase_PH_dom1"/>
</dbReference>
<dbReference type="InterPro" id="IPR015847">
    <property type="entry name" value="ExoRNase_PH_dom2"/>
</dbReference>
<dbReference type="InterPro" id="IPR036345">
    <property type="entry name" value="ExoRNase_PH_dom2_sf"/>
</dbReference>
<dbReference type="InterPro" id="IPR027408">
    <property type="entry name" value="PNPase/RNase_PH_dom_sf"/>
</dbReference>
<dbReference type="InterPro" id="IPR020568">
    <property type="entry name" value="Ribosomal_Su5_D2-typ_SF"/>
</dbReference>
<dbReference type="InterPro" id="IPR050080">
    <property type="entry name" value="RNase_PH"/>
</dbReference>
<dbReference type="InterPro" id="IPR002381">
    <property type="entry name" value="RNase_PH_bac-type"/>
</dbReference>
<dbReference type="InterPro" id="IPR018336">
    <property type="entry name" value="RNase_PH_CS"/>
</dbReference>
<dbReference type="NCBIfam" id="TIGR01966">
    <property type="entry name" value="RNasePH"/>
    <property type="match status" value="1"/>
</dbReference>
<dbReference type="PANTHER" id="PTHR11953">
    <property type="entry name" value="EXOSOME COMPLEX COMPONENT"/>
    <property type="match status" value="1"/>
</dbReference>
<dbReference type="PANTHER" id="PTHR11953:SF0">
    <property type="entry name" value="EXOSOME COMPLEX COMPONENT RRP41"/>
    <property type="match status" value="1"/>
</dbReference>
<dbReference type="Pfam" id="PF01138">
    <property type="entry name" value="RNase_PH"/>
    <property type="match status" value="1"/>
</dbReference>
<dbReference type="Pfam" id="PF03725">
    <property type="entry name" value="RNase_PH_C"/>
    <property type="match status" value="1"/>
</dbReference>
<dbReference type="SUPFAM" id="SSF55666">
    <property type="entry name" value="Ribonuclease PH domain 2-like"/>
    <property type="match status" value="1"/>
</dbReference>
<dbReference type="SUPFAM" id="SSF54211">
    <property type="entry name" value="Ribosomal protein S5 domain 2-like"/>
    <property type="match status" value="1"/>
</dbReference>
<dbReference type="PROSITE" id="PS01277">
    <property type="entry name" value="RIBONUCLEASE_PH"/>
    <property type="match status" value="1"/>
</dbReference>
<name>RNPH_FRATM</name>
<sequence length="235" mass="25503">MRPSGRNNDQLRNLKVTHNFTKHAEGSVLIEFGDTKVICTASVVAGVPKFKKDSGEGWLTAEYGMLPRSTHMRMDREAARGKQSGRTQEIQRLIGRALRASVDLTAIGENTIKIDCDVIQADGGTRTASITGASLAIADAIEYMKQNGMLDEQANPLLSQVAAISVGIYNNEPVLDLDYDEDSNAETDMNVVMNSNGGIIEIQGTAEGKDFSEEEFAKMLGLAKKGIKEIFATVF</sequence>